<proteinExistence type="inferred from homology"/>
<organism>
    <name type="scientific">Aliivibrio fischeri (strain MJ11)</name>
    <name type="common">Vibrio fischeri</name>
    <dbReference type="NCBI Taxonomy" id="388396"/>
    <lineage>
        <taxon>Bacteria</taxon>
        <taxon>Pseudomonadati</taxon>
        <taxon>Pseudomonadota</taxon>
        <taxon>Gammaproteobacteria</taxon>
        <taxon>Vibrionales</taxon>
        <taxon>Vibrionaceae</taxon>
        <taxon>Aliivibrio</taxon>
    </lineage>
</organism>
<name>RL7_ALIFM</name>
<accession>B5FC89</accession>
<feature type="chain" id="PRO_1000121505" description="Large ribosomal subunit protein bL12">
    <location>
        <begin position="1"/>
        <end position="122"/>
    </location>
</feature>
<gene>
    <name evidence="1" type="primary">rplL</name>
    <name type="ordered locus">VFMJ11_2531</name>
</gene>
<comment type="function">
    <text evidence="1">Forms part of the ribosomal stalk which helps the ribosome interact with GTP-bound translation factors. Is thus essential for accurate translation.</text>
</comment>
<comment type="subunit">
    <text evidence="1">Homodimer. Part of the ribosomal stalk of the 50S ribosomal subunit. Forms a multimeric L10(L12)X complex, where L10 forms an elongated spine to which 2 to 4 L12 dimers bind in a sequential fashion. Binds GTP-bound translation factors.</text>
</comment>
<comment type="similarity">
    <text evidence="1">Belongs to the bacterial ribosomal protein bL12 family.</text>
</comment>
<protein>
    <recommendedName>
        <fullName evidence="1">Large ribosomal subunit protein bL12</fullName>
    </recommendedName>
    <alternativeName>
        <fullName evidence="2">50S ribosomal protein L7/L12</fullName>
    </alternativeName>
</protein>
<evidence type="ECO:0000255" key="1">
    <source>
        <dbReference type="HAMAP-Rule" id="MF_00368"/>
    </source>
</evidence>
<evidence type="ECO:0000305" key="2"/>
<sequence length="122" mass="12254">MSITNEQILDAVAEMSVMQVVELIEAMEEKFGVTAAAAVVAGGAAGGDAAEEQSEFDVILTSAGANKVAVIKAVRGATGLGLKEAKGLVDSAPAPLKEGVDKAEAEALKAQLEEAGASVEVK</sequence>
<keyword id="KW-0687">Ribonucleoprotein</keyword>
<keyword id="KW-0689">Ribosomal protein</keyword>
<dbReference type="EMBL" id="CP001139">
    <property type="protein sequence ID" value="ACH65579.1"/>
    <property type="molecule type" value="Genomic_DNA"/>
</dbReference>
<dbReference type="RefSeq" id="WP_005421323.1">
    <property type="nucleotide sequence ID" value="NC_011184.1"/>
</dbReference>
<dbReference type="SMR" id="B5FC89"/>
<dbReference type="GeneID" id="54165130"/>
<dbReference type="KEGG" id="vfm:VFMJ11_2531"/>
<dbReference type="HOGENOM" id="CLU_086499_3_2_6"/>
<dbReference type="Proteomes" id="UP000001857">
    <property type="component" value="Chromosome I"/>
</dbReference>
<dbReference type="GO" id="GO:0022625">
    <property type="term" value="C:cytosolic large ribosomal subunit"/>
    <property type="evidence" value="ECO:0007669"/>
    <property type="project" value="TreeGrafter"/>
</dbReference>
<dbReference type="GO" id="GO:0003729">
    <property type="term" value="F:mRNA binding"/>
    <property type="evidence" value="ECO:0007669"/>
    <property type="project" value="TreeGrafter"/>
</dbReference>
<dbReference type="GO" id="GO:0003735">
    <property type="term" value="F:structural constituent of ribosome"/>
    <property type="evidence" value="ECO:0007669"/>
    <property type="project" value="InterPro"/>
</dbReference>
<dbReference type="GO" id="GO:0006412">
    <property type="term" value="P:translation"/>
    <property type="evidence" value="ECO:0007669"/>
    <property type="project" value="UniProtKB-UniRule"/>
</dbReference>
<dbReference type="CDD" id="cd00387">
    <property type="entry name" value="Ribosomal_L7_L12"/>
    <property type="match status" value="1"/>
</dbReference>
<dbReference type="FunFam" id="1.20.5.710:FF:000001">
    <property type="entry name" value="50S ribosomal protein L7/L12"/>
    <property type="match status" value="1"/>
</dbReference>
<dbReference type="FunFam" id="3.30.1390.10:FF:000001">
    <property type="entry name" value="50S ribosomal protein L7/L12"/>
    <property type="match status" value="1"/>
</dbReference>
<dbReference type="Gene3D" id="3.30.1390.10">
    <property type="match status" value="1"/>
</dbReference>
<dbReference type="Gene3D" id="1.20.5.710">
    <property type="entry name" value="Single helix bin"/>
    <property type="match status" value="1"/>
</dbReference>
<dbReference type="HAMAP" id="MF_00368">
    <property type="entry name" value="Ribosomal_bL12"/>
    <property type="match status" value="1"/>
</dbReference>
<dbReference type="InterPro" id="IPR000206">
    <property type="entry name" value="Ribosomal_bL12"/>
</dbReference>
<dbReference type="InterPro" id="IPR013823">
    <property type="entry name" value="Ribosomal_bL12_C"/>
</dbReference>
<dbReference type="InterPro" id="IPR014719">
    <property type="entry name" value="Ribosomal_bL12_C/ClpS-like"/>
</dbReference>
<dbReference type="InterPro" id="IPR008932">
    <property type="entry name" value="Ribosomal_bL12_oligo"/>
</dbReference>
<dbReference type="InterPro" id="IPR036235">
    <property type="entry name" value="Ribosomal_bL12_oligo_N_sf"/>
</dbReference>
<dbReference type="NCBIfam" id="TIGR00855">
    <property type="entry name" value="L12"/>
    <property type="match status" value="1"/>
</dbReference>
<dbReference type="PANTHER" id="PTHR45987">
    <property type="entry name" value="39S RIBOSOMAL PROTEIN L12"/>
    <property type="match status" value="1"/>
</dbReference>
<dbReference type="PANTHER" id="PTHR45987:SF4">
    <property type="entry name" value="LARGE RIBOSOMAL SUBUNIT PROTEIN BL12M"/>
    <property type="match status" value="1"/>
</dbReference>
<dbReference type="Pfam" id="PF00542">
    <property type="entry name" value="Ribosomal_L12"/>
    <property type="match status" value="1"/>
</dbReference>
<dbReference type="Pfam" id="PF16320">
    <property type="entry name" value="Ribosomal_L12_N"/>
    <property type="match status" value="1"/>
</dbReference>
<dbReference type="SUPFAM" id="SSF54736">
    <property type="entry name" value="ClpS-like"/>
    <property type="match status" value="1"/>
</dbReference>
<dbReference type="SUPFAM" id="SSF48300">
    <property type="entry name" value="Ribosomal protein L7/12, oligomerisation (N-terminal) domain"/>
    <property type="match status" value="1"/>
</dbReference>
<reference key="1">
    <citation type="submission" date="2008-08" db="EMBL/GenBank/DDBJ databases">
        <title>Complete sequence of Vibrio fischeri strain MJ11.</title>
        <authorList>
            <person name="Mandel M.J."/>
            <person name="Stabb E.V."/>
            <person name="Ruby E.G."/>
            <person name="Ferriera S."/>
            <person name="Johnson J."/>
            <person name="Kravitz S."/>
            <person name="Beeson K."/>
            <person name="Sutton G."/>
            <person name="Rogers Y.-H."/>
            <person name="Friedman R."/>
            <person name="Frazier M."/>
            <person name="Venter J.C."/>
        </authorList>
    </citation>
    <scope>NUCLEOTIDE SEQUENCE [LARGE SCALE GENOMIC DNA]</scope>
    <source>
        <strain>MJ11</strain>
    </source>
</reference>